<protein>
    <recommendedName>
        <fullName>Required for respiratory growth protein 1, mitochondrial</fullName>
    </recommendedName>
</protein>
<name>RRG1_YEAS7</name>
<accession>A6ZY30</accession>
<evidence type="ECO:0000250" key="1"/>
<evidence type="ECO:0000305" key="2"/>
<dbReference type="EMBL" id="AAFW02000145">
    <property type="protein sequence ID" value="EDN60410.1"/>
    <property type="molecule type" value="Genomic_DNA"/>
</dbReference>
<dbReference type="SMR" id="A6ZY30"/>
<dbReference type="HOGENOM" id="CLU_062256_0_0_1"/>
<dbReference type="Proteomes" id="UP000007060">
    <property type="component" value="Unassembled WGS sequence"/>
</dbReference>
<dbReference type="GO" id="GO:0005739">
    <property type="term" value="C:mitochondrion"/>
    <property type="evidence" value="ECO:0007669"/>
    <property type="project" value="UniProtKB-SubCell"/>
</dbReference>
<reference key="1">
    <citation type="journal article" date="2007" name="Proc. Natl. Acad. Sci. U.S.A.">
        <title>Genome sequencing and comparative analysis of Saccharomyces cerevisiae strain YJM789.</title>
        <authorList>
            <person name="Wei W."/>
            <person name="McCusker J.H."/>
            <person name="Hyman R.W."/>
            <person name="Jones T."/>
            <person name="Ning Y."/>
            <person name="Cao Z."/>
            <person name="Gu Z."/>
            <person name="Bruno D."/>
            <person name="Miranda M."/>
            <person name="Nguyen M."/>
            <person name="Wilhelmy J."/>
            <person name="Komp C."/>
            <person name="Tamse R."/>
            <person name="Wang X."/>
            <person name="Jia P."/>
            <person name="Luedi P."/>
            <person name="Oefner P.J."/>
            <person name="David L."/>
            <person name="Dietrich F.S."/>
            <person name="Li Y."/>
            <person name="Davis R.W."/>
            <person name="Steinmetz L.M."/>
        </authorList>
    </citation>
    <scope>NUCLEOTIDE SEQUENCE [LARGE SCALE GENOMIC DNA]</scope>
    <source>
        <strain>YJM789</strain>
    </source>
</reference>
<organism>
    <name type="scientific">Saccharomyces cerevisiae (strain YJM789)</name>
    <name type="common">Baker's yeast</name>
    <dbReference type="NCBI Taxonomy" id="307796"/>
    <lineage>
        <taxon>Eukaryota</taxon>
        <taxon>Fungi</taxon>
        <taxon>Dikarya</taxon>
        <taxon>Ascomycota</taxon>
        <taxon>Saccharomycotina</taxon>
        <taxon>Saccharomycetes</taxon>
        <taxon>Saccharomycetales</taxon>
        <taxon>Saccharomycetaceae</taxon>
        <taxon>Saccharomyces</taxon>
    </lineage>
</organism>
<feature type="chain" id="PRO_0000402252" description="Required for respiratory growth protein 1, mitochondrial">
    <location>
        <begin position="1"/>
        <end position="365"/>
    </location>
</feature>
<keyword id="KW-0325">Glycoprotein</keyword>
<keyword id="KW-0496">Mitochondrion</keyword>
<comment type="function">
    <text evidence="1">Essential for respiratory growth and required for mitochondrial protein synthesis. Required for vacuolar acidification (By similarity).</text>
</comment>
<comment type="subcellular location">
    <subcellularLocation>
        <location evidence="1">Mitochondrion</location>
    </subcellularLocation>
</comment>
<comment type="PTM">
    <text evidence="1">N-glycosylated. Glycosylation is important for correct localization of the protein (By similarity).</text>
</comment>
<comment type="similarity">
    <text evidence="2">Belongs to the RRG1 family.</text>
</comment>
<sequence>MAQNFGKIPSHKSYVLSLYRTVLRNIPKCCHSYAFQYEIKKTLSKQLFKHKHDKSSWSVYTLLNEFSLLNNCLLEGKLQEIKNLMKPLKKMKKQLETTKILNSLTSLGDVKTNDPEEVRRFHVLSAYIKRKQDLGLLPAYIPKTYQHKLLLPLALNEHACLKLFHIQQKLKNGPPSAGLSYTKEGRNQIWFVRSPINKGRQQSKKLGILIRKERKDSQKNIDNLNFCEINAAWALHEAIWEEYLESKKIIKVNLPKYLEYAANIPKSTKCNPSSQYQKIKEWVDPVREIMFELHSKSFQRVEYFNKYKEKLLKNGGQLAYFDKKSKEMYAKRLTLFRKMSKETLPYVTLFIEGRDLPSVLAKYGF</sequence>
<proteinExistence type="inferred from homology"/>
<gene>
    <name type="primary">RRG1</name>
    <name type="ORF">SCY_0968</name>
</gene>